<reference key="1">
    <citation type="journal article" date="2002" name="Nature">
        <title>The genome sequence of Schizosaccharomyces pombe.</title>
        <authorList>
            <person name="Wood V."/>
            <person name="Gwilliam R."/>
            <person name="Rajandream M.A."/>
            <person name="Lyne M.H."/>
            <person name="Lyne R."/>
            <person name="Stewart A."/>
            <person name="Sgouros J.G."/>
            <person name="Peat N."/>
            <person name="Hayles J."/>
            <person name="Baker S.G."/>
            <person name="Basham D."/>
            <person name="Bowman S."/>
            <person name="Brooks K."/>
            <person name="Brown D."/>
            <person name="Brown S."/>
            <person name="Chillingworth T."/>
            <person name="Churcher C.M."/>
            <person name="Collins M."/>
            <person name="Connor R."/>
            <person name="Cronin A."/>
            <person name="Davis P."/>
            <person name="Feltwell T."/>
            <person name="Fraser A."/>
            <person name="Gentles S."/>
            <person name="Goble A."/>
            <person name="Hamlin N."/>
            <person name="Harris D.E."/>
            <person name="Hidalgo J."/>
            <person name="Hodgson G."/>
            <person name="Holroyd S."/>
            <person name="Hornsby T."/>
            <person name="Howarth S."/>
            <person name="Huckle E.J."/>
            <person name="Hunt S."/>
            <person name="Jagels K."/>
            <person name="James K.D."/>
            <person name="Jones L."/>
            <person name="Jones M."/>
            <person name="Leather S."/>
            <person name="McDonald S."/>
            <person name="McLean J."/>
            <person name="Mooney P."/>
            <person name="Moule S."/>
            <person name="Mungall K.L."/>
            <person name="Murphy L.D."/>
            <person name="Niblett D."/>
            <person name="Odell C."/>
            <person name="Oliver K."/>
            <person name="O'Neil S."/>
            <person name="Pearson D."/>
            <person name="Quail M.A."/>
            <person name="Rabbinowitsch E."/>
            <person name="Rutherford K.M."/>
            <person name="Rutter S."/>
            <person name="Saunders D."/>
            <person name="Seeger K."/>
            <person name="Sharp S."/>
            <person name="Skelton J."/>
            <person name="Simmonds M.N."/>
            <person name="Squares R."/>
            <person name="Squares S."/>
            <person name="Stevens K."/>
            <person name="Taylor K."/>
            <person name="Taylor R.G."/>
            <person name="Tivey A."/>
            <person name="Walsh S.V."/>
            <person name="Warren T."/>
            <person name="Whitehead S."/>
            <person name="Woodward J.R."/>
            <person name="Volckaert G."/>
            <person name="Aert R."/>
            <person name="Robben J."/>
            <person name="Grymonprez B."/>
            <person name="Weltjens I."/>
            <person name="Vanstreels E."/>
            <person name="Rieger M."/>
            <person name="Schaefer M."/>
            <person name="Mueller-Auer S."/>
            <person name="Gabel C."/>
            <person name="Fuchs M."/>
            <person name="Duesterhoeft A."/>
            <person name="Fritzc C."/>
            <person name="Holzer E."/>
            <person name="Moestl D."/>
            <person name="Hilbert H."/>
            <person name="Borzym K."/>
            <person name="Langer I."/>
            <person name="Beck A."/>
            <person name="Lehrach H."/>
            <person name="Reinhardt R."/>
            <person name="Pohl T.M."/>
            <person name="Eger P."/>
            <person name="Zimmermann W."/>
            <person name="Wedler H."/>
            <person name="Wambutt R."/>
            <person name="Purnelle B."/>
            <person name="Goffeau A."/>
            <person name="Cadieu E."/>
            <person name="Dreano S."/>
            <person name="Gloux S."/>
            <person name="Lelaure V."/>
            <person name="Mottier S."/>
            <person name="Galibert F."/>
            <person name="Aves S.J."/>
            <person name="Xiang Z."/>
            <person name="Hunt C."/>
            <person name="Moore K."/>
            <person name="Hurst S.M."/>
            <person name="Lucas M."/>
            <person name="Rochet M."/>
            <person name="Gaillardin C."/>
            <person name="Tallada V.A."/>
            <person name="Garzon A."/>
            <person name="Thode G."/>
            <person name="Daga R.R."/>
            <person name="Cruzado L."/>
            <person name="Jimenez J."/>
            <person name="Sanchez M."/>
            <person name="del Rey F."/>
            <person name="Benito J."/>
            <person name="Dominguez A."/>
            <person name="Revuelta J.L."/>
            <person name="Moreno S."/>
            <person name="Armstrong J."/>
            <person name="Forsburg S.L."/>
            <person name="Cerutti L."/>
            <person name="Lowe T."/>
            <person name="McCombie W.R."/>
            <person name="Paulsen I."/>
            <person name="Potashkin J."/>
            <person name="Shpakovski G.V."/>
            <person name="Ussery D."/>
            <person name="Barrell B.G."/>
            <person name="Nurse P."/>
        </authorList>
    </citation>
    <scope>NUCLEOTIDE SEQUENCE [LARGE SCALE GENOMIC DNA]</scope>
    <source>
        <strain>972 / ATCC 24843</strain>
    </source>
</reference>
<reference key="2">
    <citation type="journal article" date="2006" name="Nat. Biotechnol.">
        <title>ORFeome cloning and global analysis of protein localization in the fission yeast Schizosaccharomyces pombe.</title>
        <authorList>
            <person name="Matsuyama A."/>
            <person name="Arai R."/>
            <person name="Yashiroda Y."/>
            <person name="Shirai A."/>
            <person name="Kamata A."/>
            <person name="Sekido S."/>
            <person name="Kobayashi Y."/>
            <person name="Hashimoto A."/>
            <person name="Hamamoto M."/>
            <person name="Hiraoka Y."/>
            <person name="Horinouchi S."/>
            <person name="Yoshida M."/>
        </authorList>
    </citation>
    <scope>SUBCELLULAR LOCATION [LARGE SCALE ANALYSIS]</scope>
</reference>
<reference key="3">
    <citation type="journal article" date="2007" name="J. Biol. Chem.">
        <title>HULC, a histone H2B ubiquitinating complex, modulates heterochromatin independent of histone methylation in fission yeast.</title>
        <authorList>
            <person name="Zofall M."/>
            <person name="Grewal S.I.S."/>
        </authorList>
    </citation>
    <scope>IDENTIFICATION IN THE HULC COMPLEX</scope>
    <scope>FUNCTION OF THE HULC COMPLEX</scope>
    <scope>IDENTIFICATION BY MASS SPECTROMETRY</scope>
</reference>
<dbReference type="EMBL" id="CU329670">
    <property type="protein sequence ID" value="CAB52722.1"/>
    <property type="molecule type" value="Genomic_DNA"/>
</dbReference>
<dbReference type="PIR" id="T38202">
    <property type="entry name" value="T38202"/>
</dbReference>
<dbReference type="RefSeq" id="NP_594735.1">
    <property type="nucleotide sequence ID" value="NM_001020163.2"/>
</dbReference>
<dbReference type="SMR" id="Q9UUI2"/>
<dbReference type="BioGRID" id="278171">
    <property type="interactions" value="41"/>
</dbReference>
<dbReference type="ComplexPortal" id="CPX-10330">
    <property type="entry name" value="Histone H2B ubiquitin ligase complex"/>
</dbReference>
<dbReference type="FunCoup" id="Q9UUI2">
    <property type="interactions" value="3"/>
</dbReference>
<dbReference type="IntAct" id="Q9UUI2">
    <property type="interactions" value="3"/>
</dbReference>
<dbReference type="STRING" id="284812.Q9UUI2"/>
<dbReference type="iPTMnet" id="Q9UUI2"/>
<dbReference type="SwissPalm" id="Q9UUI2"/>
<dbReference type="PaxDb" id="4896-SPAC22F8.12c.1"/>
<dbReference type="EnsemblFungi" id="SPAC22F8.12c.1">
    <property type="protein sequence ID" value="SPAC22F8.12c.1:pep"/>
    <property type="gene ID" value="SPAC22F8.12c"/>
</dbReference>
<dbReference type="GeneID" id="2541675"/>
<dbReference type="KEGG" id="spo:2541675"/>
<dbReference type="PomBase" id="SPAC22F8.12c">
    <property type="gene designation" value="shf1"/>
</dbReference>
<dbReference type="VEuPathDB" id="FungiDB:SPAC22F8.12c"/>
<dbReference type="HOGENOM" id="CLU_1611745_0_0_1"/>
<dbReference type="InParanoid" id="Q9UUI2"/>
<dbReference type="OMA" id="FWEKVRP"/>
<dbReference type="PRO" id="PR:Q9UUI2"/>
<dbReference type="Proteomes" id="UP000002485">
    <property type="component" value="Chromosome I"/>
</dbReference>
<dbReference type="GO" id="GO:0005829">
    <property type="term" value="C:cytosol"/>
    <property type="evidence" value="ECO:0007005"/>
    <property type="project" value="PomBase"/>
</dbReference>
<dbReference type="GO" id="GO:0033503">
    <property type="term" value="C:HULC complex"/>
    <property type="evidence" value="ECO:0000314"/>
    <property type="project" value="PomBase"/>
</dbReference>
<dbReference type="GO" id="GO:0005634">
    <property type="term" value="C:nucleus"/>
    <property type="evidence" value="ECO:0007005"/>
    <property type="project" value="PomBase"/>
</dbReference>
<dbReference type="GO" id="GO:0005816">
    <property type="term" value="C:spindle pole body"/>
    <property type="evidence" value="ECO:0007669"/>
    <property type="project" value="UniProtKB-SubCell"/>
</dbReference>
<dbReference type="GO" id="GO:0040029">
    <property type="term" value="P:epigenetic regulation of gene expression"/>
    <property type="evidence" value="ECO:0000315"/>
    <property type="project" value="PomBase"/>
</dbReference>
<dbReference type="GO" id="GO:0140673">
    <property type="term" value="P:transcription elongation-coupled chromatin remodeling"/>
    <property type="evidence" value="ECO:0000304"/>
    <property type="project" value="PomBase"/>
</dbReference>
<dbReference type="InterPro" id="IPR021581">
    <property type="entry name" value="Tscrpt_reg_Lge1"/>
</dbReference>
<dbReference type="Pfam" id="PF11488">
    <property type="entry name" value="Lge1"/>
    <property type="match status" value="1"/>
</dbReference>
<organism>
    <name type="scientific">Schizosaccharomyces pombe (strain 972 / ATCC 24843)</name>
    <name type="common">Fission yeast</name>
    <dbReference type="NCBI Taxonomy" id="284812"/>
    <lineage>
        <taxon>Eukaryota</taxon>
        <taxon>Fungi</taxon>
        <taxon>Dikarya</taxon>
        <taxon>Ascomycota</taxon>
        <taxon>Taphrinomycotina</taxon>
        <taxon>Schizosaccharomycetes</taxon>
        <taxon>Schizosaccharomycetales</taxon>
        <taxon>Schizosaccharomycetaceae</taxon>
        <taxon>Schizosaccharomyces</taxon>
    </lineage>
</organism>
<feature type="chain" id="PRO_0000304068" description="Small histone ubiquitination factor 1">
    <location>
        <begin position="1"/>
        <end position="165"/>
    </location>
</feature>
<feature type="region of interest" description="Disordered" evidence="1">
    <location>
        <begin position="1"/>
        <end position="86"/>
    </location>
</feature>
<feature type="compositionally biased region" description="Basic and acidic residues" evidence="1">
    <location>
        <begin position="1"/>
        <end position="17"/>
    </location>
</feature>
<feature type="compositionally biased region" description="Low complexity" evidence="1">
    <location>
        <begin position="29"/>
        <end position="38"/>
    </location>
</feature>
<feature type="compositionally biased region" description="Low complexity" evidence="1">
    <location>
        <begin position="50"/>
        <end position="60"/>
    </location>
</feature>
<feature type="compositionally biased region" description="Polar residues" evidence="1">
    <location>
        <begin position="73"/>
        <end position="86"/>
    </location>
</feature>
<protein>
    <recommendedName>
        <fullName>Small histone ubiquitination factor 1</fullName>
    </recommendedName>
</protein>
<evidence type="ECO:0000256" key="1">
    <source>
        <dbReference type="SAM" id="MobiDB-lite"/>
    </source>
</evidence>
<evidence type="ECO:0000269" key="2">
    <source>
    </source>
</evidence>
<evidence type="ECO:0000269" key="3">
    <source>
    </source>
</evidence>
<comment type="function">
    <text evidence="3">Component of the histone H2B ubiquitin ligase complex (HULC) which plays a role in transcription regulation by catalyzing the monoubiquitination of histone H2B to form H2BK123ub1. H2BK123ub1 gives a specific tag for epigenetic transcriptional activation and is also a prerequisite for H3K4me and H3K79me formation.</text>
</comment>
<comment type="subunit">
    <text evidence="3">Component of the histone H2B ubiquitin ligase complex (HULC) composed of at least brl1, brl2, rhp6 and shf1.</text>
</comment>
<comment type="subcellular location">
    <subcellularLocation>
        <location evidence="2">Nucleus</location>
    </subcellularLocation>
    <subcellularLocation>
        <location evidence="2">Cytoplasm</location>
    </subcellularLocation>
    <subcellularLocation>
        <location evidence="2">Cytoplasm</location>
        <location evidence="2">Cytoskeleton</location>
        <location evidence="2">Microtubule organizing center</location>
        <location evidence="2">Spindle pole body</location>
    </subcellularLocation>
</comment>
<keyword id="KW-0156">Chromatin regulator</keyword>
<keyword id="KW-0963">Cytoplasm</keyword>
<keyword id="KW-0206">Cytoskeleton</keyword>
<keyword id="KW-0539">Nucleus</keyword>
<keyword id="KW-1185">Reference proteome</keyword>
<keyword id="KW-0833">Ubl conjugation pathway</keyword>
<name>SHF1_SCHPO</name>
<sequence length="165" mass="18923">MSSRRNDYHYDGNDHQYRSPLKSNVDQNSFYESSYRSRQSYHQRTKTPRSSYDSPSSSTNSKEHNSPYHYRVPSNNSTRASFGAASTDTNVELPKINLPDSSLSSKLQSCKSACENSSQSLLNVEQQYAQQVHFWEKIRTDIYREGLRSDAAVKSLNDFVNNVSF</sequence>
<gene>
    <name type="primary">shf1</name>
    <name type="ORF">SPAC22F8.12c</name>
</gene>
<accession>Q9UUI2</accession>
<proteinExistence type="evidence at protein level"/>